<organism>
    <name type="scientific">Xenopus laevis</name>
    <name type="common">African clawed frog</name>
    <dbReference type="NCBI Taxonomy" id="8355"/>
    <lineage>
        <taxon>Eukaryota</taxon>
        <taxon>Metazoa</taxon>
        <taxon>Chordata</taxon>
        <taxon>Craniata</taxon>
        <taxon>Vertebrata</taxon>
        <taxon>Euteleostomi</taxon>
        <taxon>Amphibia</taxon>
        <taxon>Batrachia</taxon>
        <taxon>Anura</taxon>
        <taxon>Pipoidea</taxon>
        <taxon>Pipidae</taxon>
        <taxon>Xenopodinae</taxon>
        <taxon>Xenopus</taxon>
        <taxon>Xenopus</taxon>
    </lineage>
</organism>
<keyword id="KW-0010">Activator</keyword>
<keyword id="KW-0963">Cytoplasm</keyword>
<keyword id="KW-0238">DNA-binding</keyword>
<keyword id="KW-0460">Magnesium</keyword>
<keyword id="KW-0479">Metal-binding</keyword>
<keyword id="KW-0539">Nucleus</keyword>
<keyword id="KW-1185">Reference proteome</keyword>
<keyword id="KW-0678">Repressor</keyword>
<keyword id="KW-0804">Transcription</keyword>
<keyword id="KW-0805">Transcription regulation</keyword>
<name>FOXK2_XENLA</name>
<comment type="function">
    <text evidence="1 2">Transcriptional regulator involved in different processes such as glucose metabolism, aerobic glycolysis and autophagy (By similarity). Recognizes and binds the forkhead DNA sequence motif (5'-GTAAACA-3') and can both act as a transcription activator or repressor, depending on the context (By similarity). Acts as a key regulator of metabolic reprogramming towards aerobic glycolysis, a process in which glucose is converted to lactate in the presence of oxygen. Acts as a negative regulator of autophagy in skeletal muscle: in response to starvation, enters the nucleus, binds the promoters of autophagy genes and represses their expression, preventing proteolysis of skeletal muscle proteins (By similarity).</text>
</comment>
<comment type="subcellular location">
    <subcellularLocation>
        <location evidence="1">Nucleus</location>
    </subcellularLocation>
    <subcellularLocation>
        <location evidence="2">Cytoplasm</location>
    </subcellularLocation>
</comment>
<comment type="tissue specificity">
    <text evidence="6">In neurula embryos, expressed strongly in the future floor plate and weakly in the neural crest progenitor cells. As development progresses, expression becomes stronger in neural crest cells. At stage 24, expressed in the eye, brain, branchial arches and in the presomitic mesoderm in the posterior embryo. At stage 29, additionally expressed in the pronephric tubules. At stage 35, expressed in the migrating lateral muscle precursors of the abdomen. Additionally, the developing proctodeum and head structures including the branchial arches, eyes and otic vesicles continue to show expression. Expression also persists in the nephros.</text>
</comment>
<comment type="developmental stage">
    <text evidence="6">Expressed both maternally and zygotically. Expressed throughout all embryonic stages. Maternal expression persists during early cleavage stages. Expression levels decrease at the onset of gastrulation, increase at the start of neurulation and are then maintained throughout future embryonic stages.</text>
</comment>
<comment type="domain">
    <text evidence="1">The C-terminal part of the DNA-binding domain may contribute to DNA recognition specificity.</text>
</comment>
<comment type="sequence caution" evidence="8">
    <conflict type="miscellaneous discrepancy">
        <sequence resource="EMBL-CDS" id="AAH46369"/>
    </conflict>
    <text>Contaminating sequence. Potential poly-A sequence.</text>
</comment>
<comment type="sequence caution" evidence="8">
    <conflict type="frameshift">
        <sequence resource="EMBL-CDS" id="AAI12950"/>
    </conflict>
</comment>
<protein>
    <recommendedName>
        <fullName>Forkhead box protein K2</fullName>
        <shortName>FoxK2</shortName>
    </recommendedName>
    <alternativeName>
        <fullName>Interleukin enhancer-binding factor 1</fullName>
        <shortName>ILF1</shortName>
        <shortName evidence="7">xFoxK1</shortName>
    </alternativeName>
</protein>
<dbReference type="EMBL" id="BC046369">
    <property type="protein sequence ID" value="AAH46369.1"/>
    <property type="status" value="ALT_SEQ"/>
    <property type="molecule type" value="mRNA"/>
</dbReference>
<dbReference type="EMBL" id="BC112949">
    <property type="protein sequence ID" value="AAI12950.1"/>
    <property type="status" value="ALT_SEQ"/>
    <property type="molecule type" value="mRNA"/>
</dbReference>
<dbReference type="BMRB" id="Q7ZX03"/>
<dbReference type="SMR" id="Q7ZX03"/>
<dbReference type="IntAct" id="Q7ZX03">
    <property type="interactions" value="1"/>
</dbReference>
<dbReference type="AGR" id="Xenbase:XB-GENE-864986"/>
<dbReference type="Xenbase" id="XB-GENE-864986">
    <property type="gene designation" value="foxk2.L"/>
</dbReference>
<dbReference type="Proteomes" id="UP000186698">
    <property type="component" value="Unplaced"/>
</dbReference>
<dbReference type="GO" id="GO:0005737">
    <property type="term" value="C:cytoplasm"/>
    <property type="evidence" value="ECO:0007669"/>
    <property type="project" value="UniProtKB-SubCell"/>
</dbReference>
<dbReference type="GO" id="GO:0005634">
    <property type="term" value="C:nucleus"/>
    <property type="evidence" value="ECO:0000250"/>
    <property type="project" value="UniProtKB"/>
</dbReference>
<dbReference type="GO" id="GO:0003677">
    <property type="term" value="F:DNA binding"/>
    <property type="evidence" value="ECO:0000303"/>
    <property type="project" value="UniProtKB"/>
</dbReference>
<dbReference type="GO" id="GO:0003700">
    <property type="term" value="F:DNA-binding transcription factor activity"/>
    <property type="evidence" value="ECO:0000250"/>
    <property type="project" value="UniProtKB"/>
</dbReference>
<dbReference type="GO" id="GO:0000981">
    <property type="term" value="F:DNA-binding transcription factor activity, RNA polymerase II-specific"/>
    <property type="evidence" value="ECO:0000318"/>
    <property type="project" value="GO_Central"/>
</dbReference>
<dbReference type="GO" id="GO:0001227">
    <property type="term" value="F:DNA-binding transcription repressor activity, RNA polymerase II-specific"/>
    <property type="evidence" value="ECO:0000250"/>
    <property type="project" value="UniProtKB"/>
</dbReference>
<dbReference type="GO" id="GO:0000287">
    <property type="term" value="F:magnesium ion binding"/>
    <property type="evidence" value="ECO:0000250"/>
    <property type="project" value="UniProtKB"/>
</dbReference>
<dbReference type="GO" id="GO:0000978">
    <property type="term" value="F:RNA polymerase II cis-regulatory region sequence-specific DNA binding"/>
    <property type="evidence" value="ECO:0000318"/>
    <property type="project" value="GO_Central"/>
</dbReference>
<dbReference type="GO" id="GO:0043565">
    <property type="term" value="F:sequence-specific DNA binding"/>
    <property type="evidence" value="ECO:0000250"/>
    <property type="project" value="UniProtKB"/>
</dbReference>
<dbReference type="GO" id="GO:0000976">
    <property type="term" value="F:transcription cis-regulatory region binding"/>
    <property type="evidence" value="ECO:0000250"/>
    <property type="project" value="UniProtKB"/>
</dbReference>
<dbReference type="GO" id="GO:0061621">
    <property type="term" value="P:canonical glycolysis"/>
    <property type="evidence" value="ECO:0000250"/>
    <property type="project" value="UniProtKB"/>
</dbReference>
<dbReference type="GO" id="GO:0001678">
    <property type="term" value="P:intracellular glucose homeostasis"/>
    <property type="evidence" value="ECO:0000250"/>
    <property type="project" value="UniProtKB"/>
</dbReference>
<dbReference type="GO" id="GO:0010507">
    <property type="term" value="P:negative regulation of autophagy"/>
    <property type="evidence" value="ECO:0000250"/>
    <property type="project" value="UniProtKB"/>
</dbReference>
<dbReference type="GO" id="GO:0045892">
    <property type="term" value="P:negative regulation of DNA-templated transcription"/>
    <property type="evidence" value="ECO:0000250"/>
    <property type="project" value="UniProtKB"/>
</dbReference>
<dbReference type="GO" id="GO:0045893">
    <property type="term" value="P:positive regulation of DNA-templated transcription"/>
    <property type="evidence" value="ECO:0000250"/>
    <property type="project" value="UniProtKB"/>
</dbReference>
<dbReference type="GO" id="GO:0006355">
    <property type="term" value="P:regulation of DNA-templated transcription"/>
    <property type="evidence" value="ECO:0000303"/>
    <property type="project" value="UniProtKB"/>
</dbReference>
<dbReference type="GO" id="GO:0010906">
    <property type="term" value="P:regulation of glucose metabolic process"/>
    <property type="evidence" value="ECO:0000250"/>
    <property type="project" value="UniProtKB"/>
</dbReference>
<dbReference type="GO" id="GO:0006357">
    <property type="term" value="P:regulation of transcription by RNA polymerase II"/>
    <property type="evidence" value="ECO:0000318"/>
    <property type="project" value="GO_Central"/>
</dbReference>
<dbReference type="GO" id="GO:0042594">
    <property type="term" value="P:response to starvation"/>
    <property type="evidence" value="ECO:0000250"/>
    <property type="project" value="UniProtKB"/>
</dbReference>
<dbReference type="CDD" id="cd20055">
    <property type="entry name" value="FH_FOXK2"/>
    <property type="match status" value="1"/>
</dbReference>
<dbReference type="CDD" id="cd22723">
    <property type="entry name" value="FHA_FOXK2"/>
    <property type="match status" value="1"/>
</dbReference>
<dbReference type="FunFam" id="1.10.10.10:FF:000030">
    <property type="entry name" value="Forkhead box protein K2"/>
    <property type="match status" value="1"/>
</dbReference>
<dbReference type="FunFam" id="2.60.200.20:FF:000025">
    <property type="entry name" value="Forkhead box protein K2"/>
    <property type="match status" value="1"/>
</dbReference>
<dbReference type="Gene3D" id="2.60.200.20">
    <property type="match status" value="1"/>
</dbReference>
<dbReference type="Gene3D" id="1.10.10.10">
    <property type="entry name" value="Winged helix-like DNA-binding domain superfamily/Winged helix DNA-binding domain"/>
    <property type="match status" value="1"/>
</dbReference>
<dbReference type="InterPro" id="IPR047397">
    <property type="entry name" value="FH_FOXK2"/>
</dbReference>
<dbReference type="InterPro" id="IPR000253">
    <property type="entry name" value="FHA_dom"/>
</dbReference>
<dbReference type="InterPro" id="IPR047398">
    <property type="entry name" value="FHA_FOXK2"/>
</dbReference>
<dbReference type="InterPro" id="IPR001766">
    <property type="entry name" value="Fork_head_dom"/>
</dbReference>
<dbReference type="InterPro" id="IPR008984">
    <property type="entry name" value="SMAD_FHA_dom_sf"/>
</dbReference>
<dbReference type="InterPro" id="IPR018122">
    <property type="entry name" value="TF_fork_head_CS_1"/>
</dbReference>
<dbReference type="InterPro" id="IPR030456">
    <property type="entry name" value="TF_fork_head_CS_2"/>
</dbReference>
<dbReference type="InterPro" id="IPR036388">
    <property type="entry name" value="WH-like_DNA-bd_sf"/>
</dbReference>
<dbReference type="InterPro" id="IPR036390">
    <property type="entry name" value="WH_DNA-bd_sf"/>
</dbReference>
<dbReference type="PANTHER" id="PTHR45881">
    <property type="entry name" value="CHECKPOINT SUPPRESSOR 1-LIKE, ISOFORM A-RELATED"/>
    <property type="match status" value="1"/>
</dbReference>
<dbReference type="PANTHER" id="PTHR45881:SF3">
    <property type="entry name" value="FORKHEAD BOX PROTEIN K2"/>
    <property type="match status" value="1"/>
</dbReference>
<dbReference type="Pfam" id="PF00498">
    <property type="entry name" value="FHA"/>
    <property type="match status" value="1"/>
</dbReference>
<dbReference type="Pfam" id="PF00250">
    <property type="entry name" value="Forkhead"/>
    <property type="match status" value="1"/>
</dbReference>
<dbReference type="PRINTS" id="PR00053">
    <property type="entry name" value="FORKHEAD"/>
</dbReference>
<dbReference type="SMART" id="SM00339">
    <property type="entry name" value="FH"/>
    <property type="match status" value="1"/>
</dbReference>
<dbReference type="SMART" id="SM00240">
    <property type="entry name" value="FHA"/>
    <property type="match status" value="1"/>
</dbReference>
<dbReference type="SUPFAM" id="SSF49879">
    <property type="entry name" value="SMAD/FHA domain"/>
    <property type="match status" value="1"/>
</dbReference>
<dbReference type="SUPFAM" id="SSF46785">
    <property type="entry name" value="Winged helix' DNA-binding domain"/>
    <property type="match status" value="1"/>
</dbReference>
<dbReference type="PROSITE" id="PS50006">
    <property type="entry name" value="FHA_DOMAIN"/>
    <property type="match status" value="1"/>
</dbReference>
<dbReference type="PROSITE" id="PS00657">
    <property type="entry name" value="FORK_HEAD_1"/>
    <property type="match status" value="1"/>
</dbReference>
<dbReference type="PROSITE" id="PS00658">
    <property type="entry name" value="FORK_HEAD_2"/>
    <property type="match status" value="1"/>
</dbReference>
<dbReference type="PROSITE" id="PS50039">
    <property type="entry name" value="FORK_HEAD_3"/>
    <property type="match status" value="1"/>
</dbReference>
<gene>
    <name evidence="1" type="primary">foxk2</name>
    <name evidence="7" type="synonym">foxk1</name>
    <name evidence="9" type="synonym">ilf1</name>
</gene>
<sequence length="642" mass="68969">MAVAVCGAVVPVVARLEGREFEYLMKKRSVTIGRNSSQGCVDVSMGHSSFISRRHLEIFIGGSGDGDDADVGDFYLRCLGKNGVFVDGVFQRRGAPPLQLPRVCTFRFPSTNIKITFTALAIDKKQKLEAPESPVKPVQPQISPLTIHIPDNIAHLISPLPSPTGTISAANSCPSSPRGAGSSGFKFGRVIPPDLIAEAAQSENDKDASGGDSPKDDSKPPYSYAQLIVQAITMAPDKQLTLNGIYTHITKNYPYYRTADKGWQNSIRHNLSLNRYFIKVPRSQEEPGKGSFWRIDPASESKLVEQAFRKRRPRGVPCFRTPLGPLSSRSAPASPNHSGVFSAHSSGVQTPESLSREGSPIPLEPDASVIHPKLAVIQEARFAQSAPGSPLSSQPVLITVQRQLPQTIKPVTYTVAAPVTTATSQQAVMQTVHVVHQIPAVSVTNVTGLTPINTYTVGGQTMVAQAAVMAQPKLEHQENGDHKEVKVKVEAIPAIGHPALTTASRIIQTSSSAPLQTVTIVQTPLGQHQLPIKAVTQNGTHVVPITTAIQGQVTTANSSYSLIESPWQWRGNGTRAASPLHMLATHASASASLPTKRQNGDQSEQPDIKRGKTDEREVLAMTGLDAQSEMAMAASNEQENQK</sequence>
<accession>Q7ZX03</accession>
<accession>Q2KHQ1</accession>
<feature type="chain" id="PRO_0000262763" description="Forkhead box protein K2">
    <location>
        <begin position="1"/>
        <end position="642"/>
    </location>
</feature>
<feature type="domain" description="FHA" evidence="3">
    <location>
        <begin position="30"/>
        <end position="91"/>
    </location>
</feature>
<feature type="DNA-binding region" description="Fork-head" evidence="4">
    <location>
        <begin position="219"/>
        <end position="314"/>
    </location>
</feature>
<feature type="region of interest" description="Disordered" evidence="5">
    <location>
        <begin position="201"/>
        <end position="221"/>
    </location>
</feature>
<feature type="region of interest" description="DNA-binding; major groove" evidence="1">
    <location>
        <begin position="261"/>
        <end position="279"/>
    </location>
</feature>
<feature type="region of interest" description="DNA-binding; minor groove" evidence="1">
    <location>
        <begin position="289"/>
        <end position="293"/>
    </location>
</feature>
<feature type="region of interest" description="DNA-binding; minor groove" evidence="1">
    <location>
        <begin position="309"/>
        <end position="314"/>
    </location>
</feature>
<feature type="region of interest" description="Disordered" evidence="5">
    <location>
        <begin position="323"/>
        <end position="359"/>
    </location>
</feature>
<feature type="region of interest" description="Disordered" evidence="5">
    <location>
        <begin position="589"/>
        <end position="615"/>
    </location>
</feature>
<feature type="compositionally biased region" description="Basic and acidic residues" evidence="5">
    <location>
        <begin position="203"/>
        <end position="219"/>
    </location>
</feature>
<feature type="compositionally biased region" description="Polar residues" evidence="5">
    <location>
        <begin position="327"/>
        <end position="353"/>
    </location>
</feature>
<feature type="compositionally biased region" description="Polar residues" evidence="5">
    <location>
        <begin position="589"/>
        <end position="605"/>
    </location>
</feature>
<feature type="compositionally biased region" description="Basic and acidic residues" evidence="5">
    <location>
        <begin position="606"/>
        <end position="615"/>
    </location>
</feature>
<feature type="binding site" evidence="1">
    <location>
        <position position="271"/>
    </location>
    <ligand>
        <name>Mg(2+)</name>
        <dbReference type="ChEBI" id="CHEBI:18420"/>
    </ligand>
</feature>
<feature type="binding site" evidence="1">
    <location>
        <position position="272"/>
    </location>
    <ligand>
        <name>Mg(2+)</name>
        <dbReference type="ChEBI" id="CHEBI:18420"/>
    </ligand>
</feature>
<feature type="binding site" evidence="1">
    <location>
        <position position="274"/>
    </location>
    <ligand>
        <name>Mg(2+)</name>
        <dbReference type="ChEBI" id="CHEBI:18420"/>
    </ligand>
</feature>
<feature type="binding site" evidence="1">
    <location>
        <position position="277"/>
    </location>
    <ligand>
        <name>Mg(2+)</name>
        <dbReference type="ChEBI" id="CHEBI:18420"/>
    </ligand>
</feature>
<feature type="sequence conflict" description="In Ref. 1; AAI12950." evidence="8" ref="1">
    <original>S</original>
    <variation>P</variation>
    <location>
        <position position="266"/>
    </location>
</feature>
<feature type="sequence conflict" description="In Ref. 1; AAI12950." evidence="8" ref="1">
    <original>A</original>
    <variation>AA</variation>
    <location>
        <position position="577"/>
    </location>
</feature>
<reference evidence="9" key="1">
    <citation type="submission" date="2006-02" db="EMBL/GenBank/DDBJ databases">
        <authorList>
            <consortium name="NIH - Xenopus Gene Collection (XGC) project"/>
        </authorList>
    </citation>
    <scope>NUCLEOTIDE SEQUENCE [LARGE SCALE MRNA]</scope>
    <source>
        <tissue evidence="10">Brain</tissue>
        <tissue evidence="9">Embryo</tissue>
    </source>
</reference>
<reference key="2">
    <citation type="journal article" date="2004" name="Dev. Genes Evol.">
        <title>Isolation and developmental expression of Xenopus FoxJ1 and FoxK1.</title>
        <authorList>
            <person name="Pohl B.S."/>
            <person name="Knoechel W."/>
        </authorList>
    </citation>
    <scope>NUCLEOTIDE SEQUENCE [MRNA] OF 1-638</scope>
    <scope>TISSUE SPECIFICITY</scope>
    <scope>DEVELOPMENTAL STAGE</scope>
    <source>
        <tissue>Tadpole</tissue>
    </source>
</reference>
<reference key="3">
    <citation type="journal article" date="2005" name="Gene">
        <title>Of fox and frogs: fox (fork head/winged helix) transcription factors in Xenopus development.</title>
        <authorList>
            <person name="Pohl B.S."/>
            <person name="Knoechel W."/>
        </authorList>
    </citation>
    <scope>REVIEW</scope>
</reference>
<evidence type="ECO:0000250" key="1">
    <source>
        <dbReference type="UniProtKB" id="Q01167"/>
    </source>
</evidence>
<evidence type="ECO:0000250" key="2">
    <source>
        <dbReference type="UniProtKB" id="Q3UCQ1"/>
    </source>
</evidence>
<evidence type="ECO:0000255" key="3">
    <source>
        <dbReference type="PROSITE-ProRule" id="PRU00086"/>
    </source>
</evidence>
<evidence type="ECO:0000255" key="4">
    <source>
        <dbReference type="PROSITE-ProRule" id="PRU00089"/>
    </source>
</evidence>
<evidence type="ECO:0000256" key="5">
    <source>
        <dbReference type="SAM" id="MobiDB-lite"/>
    </source>
</evidence>
<evidence type="ECO:0000269" key="6">
    <source>
    </source>
</evidence>
<evidence type="ECO:0000303" key="7">
    <source>
    </source>
</evidence>
<evidence type="ECO:0000305" key="8"/>
<evidence type="ECO:0000312" key="9">
    <source>
        <dbReference type="EMBL" id="AAH46369.1"/>
    </source>
</evidence>
<evidence type="ECO:0000312" key="10">
    <source>
        <dbReference type="EMBL" id="AAI12950.1"/>
    </source>
</evidence>
<proteinExistence type="evidence at transcript level"/>